<evidence type="ECO:0000255" key="1">
    <source>
        <dbReference type="HAMAP-Rule" id="MF_00207"/>
    </source>
</evidence>
<comment type="catalytic activity">
    <reaction evidence="1">
        <text>diphosphate + H2O = 2 phosphate + H(+)</text>
        <dbReference type="Rhea" id="RHEA:24576"/>
        <dbReference type="ChEBI" id="CHEBI:15377"/>
        <dbReference type="ChEBI" id="CHEBI:15378"/>
        <dbReference type="ChEBI" id="CHEBI:33019"/>
        <dbReference type="ChEBI" id="CHEBI:43474"/>
        <dbReference type="EC" id="3.6.1.1"/>
    </reaction>
</comment>
<comment type="cofactor">
    <cofactor evidence="1">
        <name>Mn(2+)</name>
        <dbReference type="ChEBI" id="CHEBI:29035"/>
    </cofactor>
    <text evidence="1">Binds 2 manganese ions per subunit.</text>
</comment>
<comment type="subcellular location">
    <subcellularLocation>
        <location evidence="1">Cytoplasm</location>
    </subcellularLocation>
</comment>
<comment type="similarity">
    <text evidence="1">Belongs to the PPase class C family.</text>
</comment>
<accession>Q834N3</accession>
<keyword id="KW-0963">Cytoplasm</keyword>
<keyword id="KW-0378">Hydrolase</keyword>
<keyword id="KW-0464">Manganese</keyword>
<keyword id="KW-0479">Metal-binding</keyword>
<keyword id="KW-1185">Reference proteome</keyword>
<name>PPAC_ENTFA</name>
<organism>
    <name type="scientific">Enterococcus faecalis (strain ATCC 700802 / V583)</name>
    <dbReference type="NCBI Taxonomy" id="226185"/>
    <lineage>
        <taxon>Bacteria</taxon>
        <taxon>Bacillati</taxon>
        <taxon>Bacillota</taxon>
        <taxon>Bacilli</taxon>
        <taxon>Lactobacillales</taxon>
        <taxon>Enterococcaceae</taxon>
        <taxon>Enterococcus</taxon>
    </lineage>
</organism>
<gene>
    <name evidence="1" type="primary">ppaC</name>
    <name type="ordered locus">EF_1611</name>
</gene>
<dbReference type="EC" id="3.6.1.1" evidence="1"/>
<dbReference type="EMBL" id="AE016830">
    <property type="protein sequence ID" value="AAO81394.1"/>
    <property type="molecule type" value="Genomic_DNA"/>
</dbReference>
<dbReference type="RefSeq" id="NP_815324.1">
    <property type="nucleotide sequence ID" value="NC_004668.1"/>
</dbReference>
<dbReference type="RefSeq" id="WP_002360265.1">
    <property type="nucleotide sequence ID" value="NZ_KE136528.1"/>
</dbReference>
<dbReference type="SMR" id="Q834N3"/>
<dbReference type="STRING" id="226185.EF_1611"/>
<dbReference type="EnsemblBacteria" id="AAO81394">
    <property type="protein sequence ID" value="AAO81394"/>
    <property type="gene ID" value="EF_1611"/>
</dbReference>
<dbReference type="KEGG" id="efa:EF1611"/>
<dbReference type="PATRIC" id="fig|226185.45.peg.1896"/>
<dbReference type="eggNOG" id="COG1227">
    <property type="taxonomic scope" value="Bacteria"/>
</dbReference>
<dbReference type="HOGENOM" id="CLU_025243_0_1_9"/>
<dbReference type="Proteomes" id="UP000001415">
    <property type="component" value="Chromosome"/>
</dbReference>
<dbReference type="GO" id="GO:0005737">
    <property type="term" value="C:cytoplasm"/>
    <property type="evidence" value="ECO:0007669"/>
    <property type="project" value="UniProtKB-SubCell"/>
</dbReference>
<dbReference type="GO" id="GO:0004427">
    <property type="term" value="F:inorganic diphosphate phosphatase activity"/>
    <property type="evidence" value="ECO:0007669"/>
    <property type="project" value="UniProtKB-UniRule"/>
</dbReference>
<dbReference type="GO" id="GO:0030145">
    <property type="term" value="F:manganese ion binding"/>
    <property type="evidence" value="ECO:0007669"/>
    <property type="project" value="UniProtKB-UniRule"/>
</dbReference>
<dbReference type="FunFam" id="3.10.310.20:FF:000001">
    <property type="entry name" value="Probable manganese-dependent inorganic pyrophosphatase"/>
    <property type="match status" value="1"/>
</dbReference>
<dbReference type="FunFam" id="3.90.1640.10:FF:000001">
    <property type="entry name" value="Probable manganese-dependent inorganic pyrophosphatase"/>
    <property type="match status" value="1"/>
</dbReference>
<dbReference type="Gene3D" id="3.10.310.20">
    <property type="entry name" value="DHHA2 domain"/>
    <property type="match status" value="1"/>
</dbReference>
<dbReference type="Gene3D" id="3.90.1640.10">
    <property type="entry name" value="inorganic pyrophosphatase (n-terminal core)"/>
    <property type="match status" value="1"/>
</dbReference>
<dbReference type="HAMAP" id="MF_00207">
    <property type="entry name" value="PPase_C"/>
    <property type="match status" value="1"/>
</dbReference>
<dbReference type="InterPro" id="IPR001667">
    <property type="entry name" value="DDH_dom"/>
</dbReference>
<dbReference type="InterPro" id="IPR038763">
    <property type="entry name" value="DHH_sf"/>
</dbReference>
<dbReference type="InterPro" id="IPR004097">
    <property type="entry name" value="DHHA2"/>
</dbReference>
<dbReference type="InterPro" id="IPR038222">
    <property type="entry name" value="DHHA2_dom_sf"/>
</dbReference>
<dbReference type="InterPro" id="IPR022934">
    <property type="entry name" value="Mn-dep_inorganic_PyrPase"/>
</dbReference>
<dbReference type="InterPro" id="IPR051319">
    <property type="entry name" value="Oligoribo/pAp-PDE_c-di-AMP_PDE"/>
</dbReference>
<dbReference type="NCBIfam" id="NF003877">
    <property type="entry name" value="PRK05427.1"/>
    <property type="match status" value="1"/>
</dbReference>
<dbReference type="PANTHER" id="PTHR47618">
    <property type="entry name" value="BIFUNCTIONAL OLIGORIBONUCLEASE AND PAP PHOSPHATASE NRNA"/>
    <property type="match status" value="1"/>
</dbReference>
<dbReference type="PANTHER" id="PTHR47618:SF1">
    <property type="entry name" value="BIFUNCTIONAL OLIGORIBONUCLEASE AND PAP PHOSPHATASE NRNA"/>
    <property type="match status" value="1"/>
</dbReference>
<dbReference type="Pfam" id="PF01368">
    <property type="entry name" value="DHH"/>
    <property type="match status" value="1"/>
</dbReference>
<dbReference type="Pfam" id="PF02833">
    <property type="entry name" value="DHHA2"/>
    <property type="match status" value="1"/>
</dbReference>
<dbReference type="SMART" id="SM01131">
    <property type="entry name" value="DHHA2"/>
    <property type="match status" value="1"/>
</dbReference>
<dbReference type="SUPFAM" id="SSF64182">
    <property type="entry name" value="DHH phosphoesterases"/>
    <property type="match status" value="1"/>
</dbReference>
<proteinExistence type="inferred from homology"/>
<feature type="chain" id="PRO_0000158572" description="Probable manganese-dependent inorganic pyrophosphatase">
    <location>
        <begin position="1"/>
        <end position="308"/>
    </location>
</feature>
<feature type="binding site" evidence="1">
    <location>
        <position position="9"/>
    </location>
    <ligand>
        <name>Mn(2+)</name>
        <dbReference type="ChEBI" id="CHEBI:29035"/>
        <label>1</label>
    </ligand>
</feature>
<feature type="binding site" evidence="1">
    <location>
        <position position="13"/>
    </location>
    <ligand>
        <name>Mn(2+)</name>
        <dbReference type="ChEBI" id="CHEBI:29035"/>
        <label>1</label>
    </ligand>
</feature>
<feature type="binding site" evidence="1">
    <location>
        <position position="15"/>
    </location>
    <ligand>
        <name>Mn(2+)</name>
        <dbReference type="ChEBI" id="CHEBI:29035"/>
        <label>2</label>
    </ligand>
</feature>
<feature type="binding site" evidence="1">
    <location>
        <position position="75"/>
    </location>
    <ligand>
        <name>Mn(2+)</name>
        <dbReference type="ChEBI" id="CHEBI:29035"/>
        <label>1</label>
    </ligand>
</feature>
<feature type="binding site" evidence="1">
    <location>
        <position position="75"/>
    </location>
    <ligand>
        <name>Mn(2+)</name>
        <dbReference type="ChEBI" id="CHEBI:29035"/>
        <label>2</label>
    </ligand>
</feature>
<feature type="binding site" evidence="1">
    <location>
        <position position="97"/>
    </location>
    <ligand>
        <name>Mn(2+)</name>
        <dbReference type="ChEBI" id="CHEBI:29035"/>
        <label>2</label>
    </ligand>
</feature>
<feature type="binding site" evidence="1">
    <location>
        <position position="149"/>
    </location>
    <ligand>
        <name>Mn(2+)</name>
        <dbReference type="ChEBI" id="CHEBI:29035"/>
        <label>2</label>
    </ligand>
</feature>
<reference key="1">
    <citation type="journal article" date="2003" name="Science">
        <title>Role of mobile DNA in the evolution of vancomycin-resistant Enterococcus faecalis.</title>
        <authorList>
            <person name="Paulsen I.T."/>
            <person name="Banerjei L."/>
            <person name="Myers G.S.A."/>
            <person name="Nelson K.E."/>
            <person name="Seshadri R."/>
            <person name="Read T.D."/>
            <person name="Fouts D.E."/>
            <person name="Eisen J.A."/>
            <person name="Gill S.R."/>
            <person name="Heidelberg J.F."/>
            <person name="Tettelin H."/>
            <person name="Dodson R.J."/>
            <person name="Umayam L.A."/>
            <person name="Brinkac L.M."/>
            <person name="Beanan M.J."/>
            <person name="Daugherty S.C."/>
            <person name="DeBoy R.T."/>
            <person name="Durkin S.A."/>
            <person name="Kolonay J.F."/>
            <person name="Madupu R."/>
            <person name="Nelson W.C."/>
            <person name="Vamathevan J.J."/>
            <person name="Tran B."/>
            <person name="Upton J."/>
            <person name="Hansen T."/>
            <person name="Shetty J."/>
            <person name="Khouri H.M."/>
            <person name="Utterback T.R."/>
            <person name="Radune D."/>
            <person name="Ketchum K.A."/>
            <person name="Dougherty B.A."/>
            <person name="Fraser C.M."/>
        </authorList>
    </citation>
    <scope>NUCLEOTIDE SEQUENCE [LARGE SCALE GENOMIC DNA]</scope>
    <source>
        <strain>ATCC 700802 / V583</strain>
    </source>
</reference>
<protein>
    <recommendedName>
        <fullName evidence="1">Probable manganese-dependent inorganic pyrophosphatase</fullName>
        <ecNumber evidence="1">3.6.1.1</ecNumber>
    </recommendedName>
    <alternativeName>
        <fullName evidence="1">Pyrophosphate phospho-hydrolase</fullName>
        <shortName evidence="1">PPase</shortName>
    </alternativeName>
</protein>
<sequence>MSKILVFGHQNPDTDAIGAAISFAYLQKELGKETEAVALGTPSEETQYALDYFNIEAPRVVTEAASETNQVMLVDHNEFQQSISDIAEVNILAVVDHHRIANFETADPLYYRAEPVGCTSTIIYKMFKENNVTIPAQIAGMMVSAIISDTLLFKSPTCTQEDIDAAHALADIAEINLEGYGLDLLKAGTNLSDKSAEVLLDLDAKSFPMNGKTVRVAQVNTVDLAEVLDRQAELEAAMAAENAANNYDLFVLIITNILDSDSELLAIGAEQAKIEAAFNVTLVNNRAFLPGVVSRKKQVVPQLTEVFN</sequence>